<proteinExistence type="inferred from homology"/>
<evidence type="ECO:0000255" key="1">
    <source>
        <dbReference type="HAMAP-Rule" id="MF_00458"/>
    </source>
</evidence>
<keyword id="KW-0004">4Fe-4S</keyword>
<keyword id="KW-0148">Chlorophyll</keyword>
<keyword id="KW-0150">Chloroplast</keyword>
<keyword id="KW-0157">Chromophore</keyword>
<keyword id="KW-0249">Electron transport</keyword>
<keyword id="KW-0408">Iron</keyword>
<keyword id="KW-0411">Iron-sulfur</keyword>
<keyword id="KW-0460">Magnesium</keyword>
<keyword id="KW-0472">Membrane</keyword>
<keyword id="KW-0479">Metal-binding</keyword>
<keyword id="KW-0560">Oxidoreductase</keyword>
<keyword id="KW-0602">Photosynthesis</keyword>
<keyword id="KW-0603">Photosystem I</keyword>
<keyword id="KW-0934">Plastid</keyword>
<keyword id="KW-0793">Thylakoid</keyword>
<keyword id="KW-0812">Transmembrane</keyword>
<keyword id="KW-1133">Transmembrane helix</keyword>
<keyword id="KW-0813">Transport</keyword>
<geneLocation type="chloroplast"/>
<organism>
    <name type="scientific">Morus indica</name>
    <name type="common">Mulberry</name>
    <dbReference type="NCBI Taxonomy" id="248361"/>
    <lineage>
        <taxon>Eukaryota</taxon>
        <taxon>Viridiplantae</taxon>
        <taxon>Streptophyta</taxon>
        <taxon>Embryophyta</taxon>
        <taxon>Tracheophyta</taxon>
        <taxon>Spermatophyta</taxon>
        <taxon>Magnoliopsida</taxon>
        <taxon>eudicotyledons</taxon>
        <taxon>Gunneridae</taxon>
        <taxon>Pentapetalae</taxon>
        <taxon>rosids</taxon>
        <taxon>fabids</taxon>
        <taxon>Rosales</taxon>
        <taxon>Moraceae</taxon>
        <taxon>Moreae</taxon>
        <taxon>Morus</taxon>
    </lineage>
</organism>
<accession>Q09X17</accession>
<protein>
    <recommendedName>
        <fullName evidence="1">Photosystem I P700 chlorophyll a apoprotein A1</fullName>
        <ecNumber evidence="1">1.97.1.12</ecNumber>
    </recommendedName>
    <alternativeName>
        <fullName evidence="1">PSI-A</fullName>
    </alternativeName>
    <alternativeName>
        <fullName evidence="1">PsaA</fullName>
    </alternativeName>
</protein>
<name>PSAA_MORIN</name>
<comment type="function">
    <text>PsaA and PsaB bind P700, the primary electron donor of photosystem I (PSI), as well as the electron acceptors A0, A1 and FX. PSI is a plastocyanin-ferredoxin oxidoreductase, converting photonic excitation into a charge separation, which transfers an electron from the donor P700 chlorophyll pair to the spectroscopically characterized acceptors A0, A1, FX, FA and FB in turn. Oxidized P700 is reduced on the lumenal side of the thylakoid membrane by plastocyanin.</text>
</comment>
<comment type="catalytic activity">
    <reaction evidence="1">
        <text>reduced [plastocyanin] + hnu + oxidized [2Fe-2S]-[ferredoxin] = oxidized [plastocyanin] + reduced [2Fe-2S]-[ferredoxin]</text>
        <dbReference type="Rhea" id="RHEA:30407"/>
        <dbReference type="Rhea" id="RHEA-COMP:10000"/>
        <dbReference type="Rhea" id="RHEA-COMP:10001"/>
        <dbReference type="Rhea" id="RHEA-COMP:10039"/>
        <dbReference type="Rhea" id="RHEA-COMP:10040"/>
        <dbReference type="ChEBI" id="CHEBI:29036"/>
        <dbReference type="ChEBI" id="CHEBI:30212"/>
        <dbReference type="ChEBI" id="CHEBI:33737"/>
        <dbReference type="ChEBI" id="CHEBI:33738"/>
        <dbReference type="ChEBI" id="CHEBI:49552"/>
        <dbReference type="EC" id="1.97.1.12"/>
    </reaction>
</comment>
<comment type="cofactor">
    <text evidence="1">P700 is a chlorophyll a/chlorophyll a' dimer, A0 is one or more chlorophyll a, A1 is one or both phylloquinones and FX is a shared 4Fe-4S iron-sulfur center.</text>
</comment>
<comment type="subunit">
    <text evidence="1">The PsaA/B heterodimer binds the P700 chlorophyll special pair and subsequent electron acceptors. PSI consists of a core antenna complex that captures photons, and an electron transfer chain that converts photonic excitation into a charge separation. The eukaryotic PSI reaction center is composed of at least 11 subunits.</text>
</comment>
<comment type="subcellular location">
    <subcellularLocation>
        <location evidence="1">Plastid</location>
        <location evidence="1">Chloroplast thylakoid membrane</location>
        <topology evidence="1">Multi-pass membrane protein</topology>
    </subcellularLocation>
</comment>
<comment type="similarity">
    <text evidence="1">Belongs to the PsaA/PsaB family.</text>
</comment>
<reference key="1">
    <citation type="submission" date="2005-09" db="EMBL/GenBank/DDBJ databases">
        <title>The chloroplast genome of mulberry: structural features and comparative analysis.</title>
        <authorList>
            <person name="Ravi V."/>
            <person name="Khurana J.P."/>
            <person name="Tyagi A.K."/>
            <person name="Khurana P."/>
        </authorList>
    </citation>
    <scope>NUCLEOTIDE SEQUENCE [LARGE SCALE GENOMIC DNA]</scope>
    <source>
        <strain>cv. K2</strain>
    </source>
</reference>
<feature type="chain" id="PRO_0000275951" description="Photosystem I P700 chlorophyll a apoprotein A1">
    <location>
        <begin position="1"/>
        <end position="750"/>
    </location>
</feature>
<feature type="transmembrane region" description="Helical; Name=I" evidence="1">
    <location>
        <begin position="70"/>
        <end position="93"/>
    </location>
</feature>
<feature type="transmembrane region" description="Helical; Name=II" evidence="1">
    <location>
        <begin position="156"/>
        <end position="179"/>
    </location>
</feature>
<feature type="transmembrane region" description="Helical; Name=III" evidence="1">
    <location>
        <begin position="195"/>
        <end position="219"/>
    </location>
</feature>
<feature type="transmembrane region" description="Helical; Name=IV" evidence="1">
    <location>
        <begin position="291"/>
        <end position="309"/>
    </location>
</feature>
<feature type="transmembrane region" description="Helical; Name=V" evidence="1">
    <location>
        <begin position="346"/>
        <end position="369"/>
    </location>
</feature>
<feature type="transmembrane region" description="Helical; Name=VI" evidence="1">
    <location>
        <begin position="385"/>
        <end position="411"/>
    </location>
</feature>
<feature type="transmembrane region" description="Helical; Name=VII" evidence="1">
    <location>
        <begin position="433"/>
        <end position="455"/>
    </location>
</feature>
<feature type="transmembrane region" description="Helical; Name=VIII" evidence="1">
    <location>
        <begin position="531"/>
        <end position="549"/>
    </location>
</feature>
<feature type="transmembrane region" description="Helical; Name=IX" evidence="1">
    <location>
        <begin position="589"/>
        <end position="610"/>
    </location>
</feature>
<feature type="transmembrane region" description="Helical; Name=X" evidence="1">
    <location>
        <begin position="664"/>
        <end position="686"/>
    </location>
</feature>
<feature type="transmembrane region" description="Helical; Name=XI" evidence="1">
    <location>
        <begin position="724"/>
        <end position="744"/>
    </location>
</feature>
<feature type="binding site" evidence="1">
    <location>
        <position position="573"/>
    </location>
    <ligand>
        <name>[4Fe-4S] cluster</name>
        <dbReference type="ChEBI" id="CHEBI:49883"/>
        <note>ligand shared between dimeric partners</note>
    </ligand>
</feature>
<feature type="binding site" evidence="1">
    <location>
        <position position="582"/>
    </location>
    <ligand>
        <name>[4Fe-4S] cluster</name>
        <dbReference type="ChEBI" id="CHEBI:49883"/>
        <note>ligand shared between dimeric partners</note>
    </ligand>
</feature>
<feature type="binding site" description="axial binding residue" evidence="1">
    <location>
        <position position="675"/>
    </location>
    <ligand>
        <name>chlorophyll a'</name>
        <dbReference type="ChEBI" id="CHEBI:189419"/>
        <label>A1</label>
    </ligand>
    <ligandPart>
        <name>Mg</name>
        <dbReference type="ChEBI" id="CHEBI:25107"/>
    </ligandPart>
</feature>
<feature type="binding site" description="axial binding residue" evidence="1">
    <location>
        <position position="683"/>
    </location>
    <ligand>
        <name>chlorophyll a</name>
        <dbReference type="ChEBI" id="CHEBI:58416"/>
        <label>A3</label>
    </ligand>
    <ligandPart>
        <name>Mg</name>
        <dbReference type="ChEBI" id="CHEBI:25107"/>
    </ligandPart>
</feature>
<feature type="binding site" evidence="1">
    <location>
        <position position="691"/>
    </location>
    <ligand>
        <name>chlorophyll a</name>
        <dbReference type="ChEBI" id="CHEBI:58416"/>
        <label>A3</label>
    </ligand>
</feature>
<feature type="binding site" evidence="1">
    <location>
        <position position="692"/>
    </location>
    <ligand>
        <name>phylloquinone</name>
        <dbReference type="ChEBI" id="CHEBI:18067"/>
        <label>A</label>
    </ligand>
</feature>
<gene>
    <name evidence="1" type="primary">psaA</name>
    <name type="ordered locus">MoinCp021</name>
</gene>
<dbReference type="EC" id="1.97.1.12" evidence="1"/>
<dbReference type="EMBL" id="DQ226511">
    <property type="protein sequence ID" value="ABB20958.1"/>
    <property type="molecule type" value="Genomic_DNA"/>
</dbReference>
<dbReference type="RefSeq" id="YP_762261.1">
    <property type="nucleotide sequence ID" value="NC_008359.1"/>
</dbReference>
<dbReference type="SMR" id="Q09X17"/>
<dbReference type="GeneID" id="4290569"/>
<dbReference type="GO" id="GO:0009535">
    <property type="term" value="C:chloroplast thylakoid membrane"/>
    <property type="evidence" value="ECO:0007669"/>
    <property type="project" value="UniProtKB-SubCell"/>
</dbReference>
<dbReference type="GO" id="GO:0009522">
    <property type="term" value="C:photosystem I"/>
    <property type="evidence" value="ECO:0007669"/>
    <property type="project" value="UniProtKB-KW"/>
</dbReference>
<dbReference type="GO" id="GO:0051539">
    <property type="term" value="F:4 iron, 4 sulfur cluster binding"/>
    <property type="evidence" value="ECO:0007669"/>
    <property type="project" value="UniProtKB-KW"/>
</dbReference>
<dbReference type="GO" id="GO:0016168">
    <property type="term" value="F:chlorophyll binding"/>
    <property type="evidence" value="ECO:0007669"/>
    <property type="project" value="UniProtKB-KW"/>
</dbReference>
<dbReference type="GO" id="GO:0009055">
    <property type="term" value="F:electron transfer activity"/>
    <property type="evidence" value="ECO:0007669"/>
    <property type="project" value="UniProtKB-UniRule"/>
</dbReference>
<dbReference type="GO" id="GO:0000287">
    <property type="term" value="F:magnesium ion binding"/>
    <property type="evidence" value="ECO:0007669"/>
    <property type="project" value="UniProtKB-UniRule"/>
</dbReference>
<dbReference type="GO" id="GO:0016491">
    <property type="term" value="F:oxidoreductase activity"/>
    <property type="evidence" value="ECO:0007669"/>
    <property type="project" value="UniProtKB-KW"/>
</dbReference>
<dbReference type="GO" id="GO:0015979">
    <property type="term" value="P:photosynthesis"/>
    <property type="evidence" value="ECO:0007669"/>
    <property type="project" value="UniProtKB-UniRule"/>
</dbReference>
<dbReference type="FunFam" id="1.20.1130.10:FF:000001">
    <property type="entry name" value="Photosystem I P700 chlorophyll a apoprotein A2"/>
    <property type="match status" value="1"/>
</dbReference>
<dbReference type="Gene3D" id="1.20.1130.10">
    <property type="entry name" value="Photosystem I PsaA/PsaB"/>
    <property type="match status" value="1"/>
</dbReference>
<dbReference type="HAMAP" id="MF_00458">
    <property type="entry name" value="PSI_PsaA"/>
    <property type="match status" value="1"/>
</dbReference>
<dbReference type="InterPro" id="IPR006243">
    <property type="entry name" value="PSI_PsaA"/>
</dbReference>
<dbReference type="InterPro" id="IPR001280">
    <property type="entry name" value="PSI_PsaA/B"/>
</dbReference>
<dbReference type="InterPro" id="IPR020586">
    <property type="entry name" value="PSI_PsaA/B_CS"/>
</dbReference>
<dbReference type="InterPro" id="IPR036408">
    <property type="entry name" value="PSI_PsaA/B_sf"/>
</dbReference>
<dbReference type="NCBIfam" id="TIGR01335">
    <property type="entry name" value="psaA"/>
    <property type="match status" value="1"/>
</dbReference>
<dbReference type="PANTHER" id="PTHR30128">
    <property type="entry name" value="OUTER MEMBRANE PROTEIN, OMPA-RELATED"/>
    <property type="match status" value="1"/>
</dbReference>
<dbReference type="PANTHER" id="PTHR30128:SF19">
    <property type="entry name" value="PHOTOSYSTEM I P700 CHLOROPHYLL A APOPROTEIN A1-RELATED"/>
    <property type="match status" value="1"/>
</dbReference>
<dbReference type="Pfam" id="PF00223">
    <property type="entry name" value="PsaA_PsaB"/>
    <property type="match status" value="1"/>
</dbReference>
<dbReference type="PIRSF" id="PIRSF002905">
    <property type="entry name" value="PSI_A"/>
    <property type="match status" value="1"/>
</dbReference>
<dbReference type="PRINTS" id="PR00257">
    <property type="entry name" value="PHOTSYSPSAAB"/>
</dbReference>
<dbReference type="SUPFAM" id="SSF81558">
    <property type="entry name" value="Photosystem I subunits PsaA/PsaB"/>
    <property type="match status" value="1"/>
</dbReference>
<dbReference type="PROSITE" id="PS00419">
    <property type="entry name" value="PHOTOSYSTEM_I_PSAAB"/>
    <property type="match status" value="1"/>
</dbReference>
<sequence length="750" mass="83111">MIIRSPEPDVKILVDRDPIKTSFEEWARPGHFSRTIAKGPDTTTWIWNLHADAHDFDSQTSDLEEISRKVFSAHFGQLSIIFLWLSGMYFHGARFSNYEAWLSDPTHIGPSAQVVWPIVGQEILNGDVGGGFRGIQITSGFFQIWRASGITNELQLYCTAIGALVFAALMLFAGWFHYHKAAPKLAWFQDVESMLNHHLAGLLGLGSLSWAGHQVHVSLPINQFLNAGVDPKEIPLPHEFILNRDLLAQLYPSFAEGATPFFTLNWSKYAEFLTFRGGLDPVTGGLWLTDIAHHHLAIAILFLVAGHMYRTNWGIGHGIKDILEAHKGPFTGQGHKGLYEILTTSWHAQLSLNLAMLGSLTIVVAHHMYSMPPYPYLATDYGTQLSLFTHHMWIGGFLIVGAAAHAAIFMVRDYDPTTRYNDLLDRVLRHRDAIISHLNWVCIFLGFHSFGLYIHNDTMSALGRPQDMFSDTAIQLQPVFAQWIQNTHALAPGATAPGATTSTSLTWGGGDLVAVGGKVALLPIPLGTADFLVHHIHAFTIHVTVLILLKGVLFARSSRLIPDKANLGFRFPCDGPGRGGTCQVSAWDHVFLGLFWMYNSISVVIFHFSWKMQSDVWGSISDQGVVTHITGGNFAQSSTTINGWLRDFLWAQASQVIQSYGSSLSAYGLFFLGAHFVWAFSLMFLFSGRGYWQELIESIVWAHNKLKVAPATQPRALSIVQGRAVGVTHYLLGGIATTWAFFLARIIAVG</sequence>